<keyword id="KW-0046">Antibiotic resistance</keyword>
<keyword id="KW-1003">Cell membrane</keyword>
<keyword id="KW-0133">Cell shape</keyword>
<keyword id="KW-0961">Cell wall biogenesis/degradation</keyword>
<keyword id="KW-0378">Hydrolase</keyword>
<keyword id="KW-0472">Membrane</keyword>
<keyword id="KW-0573">Peptidoglycan synthesis</keyword>
<keyword id="KW-1185">Reference proteome</keyword>
<keyword id="KW-0812">Transmembrane</keyword>
<keyword id="KW-1133">Transmembrane helix</keyword>
<proteinExistence type="inferred from homology"/>
<evidence type="ECO:0000255" key="1">
    <source>
        <dbReference type="HAMAP-Rule" id="MF_01006"/>
    </source>
</evidence>
<organism>
    <name type="scientific">Macrococcus caseolyticus (strain JCSC5402)</name>
    <name type="common">Macrococcoides caseolyticum</name>
    <dbReference type="NCBI Taxonomy" id="458233"/>
    <lineage>
        <taxon>Bacteria</taxon>
        <taxon>Bacillati</taxon>
        <taxon>Bacillota</taxon>
        <taxon>Bacilli</taxon>
        <taxon>Bacillales</taxon>
        <taxon>Staphylococcaceae</taxon>
        <taxon>Macrococcoides</taxon>
    </lineage>
</organism>
<accession>B9EA92</accession>
<comment type="function">
    <text evidence="1">Catalyzes the dephosphorylation of undecaprenyl diphosphate (UPP). Confers resistance to bacitracin.</text>
</comment>
<comment type="catalytic activity">
    <reaction evidence="1">
        <text>di-trans,octa-cis-undecaprenyl diphosphate + H2O = di-trans,octa-cis-undecaprenyl phosphate + phosphate + H(+)</text>
        <dbReference type="Rhea" id="RHEA:28094"/>
        <dbReference type="ChEBI" id="CHEBI:15377"/>
        <dbReference type="ChEBI" id="CHEBI:15378"/>
        <dbReference type="ChEBI" id="CHEBI:43474"/>
        <dbReference type="ChEBI" id="CHEBI:58405"/>
        <dbReference type="ChEBI" id="CHEBI:60392"/>
        <dbReference type="EC" id="3.6.1.27"/>
    </reaction>
</comment>
<comment type="subcellular location">
    <subcellularLocation>
        <location evidence="1">Cell membrane</location>
        <topology evidence="1">Multi-pass membrane protein</topology>
    </subcellularLocation>
</comment>
<comment type="miscellaneous">
    <text>Bacitracin is thought to be involved in the inhibition of peptidoglycan synthesis by sequestering undecaprenyl diphosphate, thereby reducing the pool of lipid carrier available.</text>
</comment>
<comment type="similarity">
    <text evidence="1">Belongs to the UppP family.</text>
</comment>
<protein>
    <recommendedName>
        <fullName evidence="1">Undecaprenyl-diphosphatase</fullName>
        <ecNumber evidence="1">3.6.1.27</ecNumber>
    </recommendedName>
    <alternativeName>
        <fullName evidence="1">Bacitracin resistance protein</fullName>
    </alternativeName>
    <alternativeName>
        <fullName evidence="1">Undecaprenyl pyrophosphate phosphatase</fullName>
    </alternativeName>
</protein>
<name>UPPP_MACCJ</name>
<dbReference type="EC" id="3.6.1.27" evidence="1"/>
<dbReference type="EMBL" id="AP009484">
    <property type="protein sequence ID" value="BAH17153.1"/>
    <property type="molecule type" value="Genomic_DNA"/>
</dbReference>
<dbReference type="RefSeq" id="WP_012656354.1">
    <property type="nucleotide sequence ID" value="NC_011999.1"/>
</dbReference>
<dbReference type="SMR" id="B9EA92"/>
<dbReference type="STRING" id="458233.MCCL_0446"/>
<dbReference type="KEGG" id="mcl:MCCL_0446"/>
<dbReference type="eggNOG" id="COG1968">
    <property type="taxonomic scope" value="Bacteria"/>
</dbReference>
<dbReference type="HOGENOM" id="CLU_060296_2_0_9"/>
<dbReference type="OrthoDB" id="9808289at2"/>
<dbReference type="Proteomes" id="UP000001383">
    <property type="component" value="Chromosome"/>
</dbReference>
<dbReference type="GO" id="GO:0005886">
    <property type="term" value="C:plasma membrane"/>
    <property type="evidence" value="ECO:0007669"/>
    <property type="project" value="UniProtKB-SubCell"/>
</dbReference>
<dbReference type="GO" id="GO:0050380">
    <property type="term" value="F:undecaprenyl-diphosphatase activity"/>
    <property type="evidence" value="ECO:0007669"/>
    <property type="project" value="UniProtKB-UniRule"/>
</dbReference>
<dbReference type="GO" id="GO:0071555">
    <property type="term" value="P:cell wall organization"/>
    <property type="evidence" value="ECO:0007669"/>
    <property type="project" value="UniProtKB-KW"/>
</dbReference>
<dbReference type="GO" id="GO:0009252">
    <property type="term" value="P:peptidoglycan biosynthetic process"/>
    <property type="evidence" value="ECO:0007669"/>
    <property type="project" value="UniProtKB-KW"/>
</dbReference>
<dbReference type="GO" id="GO:0008360">
    <property type="term" value="P:regulation of cell shape"/>
    <property type="evidence" value="ECO:0007669"/>
    <property type="project" value="UniProtKB-KW"/>
</dbReference>
<dbReference type="GO" id="GO:0046677">
    <property type="term" value="P:response to antibiotic"/>
    <property type="evidence" value="ECO:0007669"/>
    <property type="project" value="UniProtKB-UniRule"/>
</dbReference>
<dbReference type="HAMAP" id="MF_01006">
    <property type="entry name" value="Undec_diphosphatase"/>
    <property type="match status" value="1"/>
</dbReference>
<dbReference type="InterPro" id="IPR003824">
    <property type="entry name" value="UppP"/>
</dbReference>
<dbReference type="NCBIfam" id="NF001390">
    <property type="entry name" value="PRK00281.1-4"/>
    <property type="match status" value="1"/>
</dbReference>
<dbReference type="NCBIfam" id="TIGR00753">
    <property type="entry name" value="undec_PP_bacA"/>
    <property type="match status" value="1"/>
</dbReference>
<dbReference type="PANTHER" id="PTHR30622">
    <property type="entry name" value="UNDECAPRENYL-DIPHOSPHATASE"/>
    <property type="match status" value="1"/>
</dbReference>
<dbReference type="PANTHER" id="PTHR30622:SF3">
    <property type="entry name" value="UNDECAPRENYL-DIPHOSPHATASE"/>
    <property type="match status" value="1"/>
</dbReference>
<dbReference type="Pfam" id="PF02673">
    <property type="entry name" value="BacA"/>
    <property type="match status" value="1"/>
</dbReference>
<gene>
    <name evidence="1" type="primary">uppP</name>
    <name type="ordered locus">MCCL_0446</name>
</gene>
<reference key="1">
    <citation type="journal article" date="2009" name="J. Bacteriol.">
        <title>Complete genome sequence of Macrococcus caseolyticus strain JCSCS5402, reflecting the ancestral genome of the human-pathogenic staphylococci.</title>
        <authorList>
            <person name="Baba T."/>
            <person name="Kuwahara-Arai K."/>
            <person name="Uchiyama I."/>
            <person name="Takeuchi F."/>
            <person name="Ito T."/>
            <person name="Hiramatsu K."/>
        </authorList>
    </citation>
    <scope>NUCLEOTIDE SEQUENCE [LARGE SCALE GENOMIC DNA]</scope>
    <source>
        <strain>JCSC5402</strain>
    </source>
</reference>
<feature type="chain" id="PRO_1000148818" description="Undecaprenyl-diphosphatase">
    <location>
        <begin position="1"/>
        <end position="281"/>
    </location>
</feature>
<feature type="transmembrane region" description="Helical" evidence="1">
    <location>
        <begin position="49"/>
        <end position="69"/>
    </location>
</feature>
<feature type="transmembrane region" description="Helical" evidence="1">
    <location>
        <begin position="92"/>
        <end position="112"/>
    </location>
</feature>
<feature type="transmembrane region" description="Helical" evidence="1">
    <location>
        <begin position="116"/>
        <end position="136"/>
    </location>
</feature>
<feature type="transmembrane region" description="Helical" evidence="1">
    <location>
        <begin position="152"/>
        <end position="172"/>
    </location>
</feature>
<feature type="transmembrane region" description="Helical" evidence="1">
    <location>
        <begin position="196"/>
        <end position="216"/>
    </location>
</feature>
<feature type="transmembrane region" description="Helical" evidence="1">
    <location>
        <begin position="224"/>
        <end position="244"/>
    </location>
</feature>
<feature type="transmembrane region" description="Helical" evidence="1">
    <location>
        <begin position="257"/>
        <end position="277"/>
    </location>
</feature>
<sequence>MTFFELVKALILGIVEGLTEFAPVSSTGHQILVDDMWLQTKYVLNSQESANTFKIVIQLGSIFAAAWIFRHRFLEVLHIEKTKTEGPRLNLLHIFIGLIPAGIMGLLFDDFIDKHLFSVPTVLIGLALGALLMIAADLFNKKVTHTTTVDEMTYKQALIIGVAQCLALWPGFSRSGSTISAGVLLKMNHKAASDFTFIMAVPIMFAASAKSLASNIQYIHSDQILFYIVGFIAAFIFGVLSIRLFLSLINRVKLMPFAIYRLILVAVIAVLYFGFGIGKGI</sequence>